<sequence>MALLQISEPGLSAAPHQRRLAAGIDLGTTNSLVATVRSGQAETLPDHEGRHLLPSVVHYQQQGHTVGYAARDNAAQDTTNTISSVKRMMGRSLADIQARYPHLPYRFKASVNGLPMIDTAAGLLNPVRVSADILKALAARASESLSGELDGVVITVPAYFDDAQRQGTKDAARLAGLHVLRLLNEPTAAAIAYGLDSGKEGVIAVYDLGGGTFDISILRLSRGVFEVLATGGDSALGGDDFDHLLADYIREQAGIADRSDNRVQRELLDAAIAAKIALSDADTVRVNVAGWQGEITREQFNDLISALVKRTLLACRRALKDAGVDPQDVLEVVMVGGSTRVPLVRERVGEFFGRTPLTAIDPDKVVAIGAAIQADILVGNKPDSEMLLLDVIPLSLGLETMGGLVEKVIPRNTTIPVARAQDFTTFKDGQTAMSIHVMQGERELVQDCRSLARFALRGIPPLPAGGAHIRVTFQVDADGLLSVTAMEKSTGVEASIQVKPSYGLTDGEIASMIKDSMSFAEQDVKARMLAEQKVEAARVLESLTGALTADAALLSAAERQCIDDAAAHLSAVAQGDDVDAIEQAIKNVDKQTQEFAARRMDQSVRRALKGHSVDEV</sequence>
<evidence type="ECO:0000255" key="1">
    <source>
        <dbReference type="HAMAP-Rule" id="MF_00679"/>
    </source>
</evidence>
<keyword id="KW-0067">ATP-binding</keyword>
<keyword id="KW-0143">Chaperone</keyword>
<keyword id="KW-0547">Nucleotide-binding</keyword>
<comment type="function">
    <text evidence="1">Chaperone involved in the maturation of iron-sulfur cluster-containing proteins. Has a low intrinsic ATPase activity which is markedly stimulated by HscB. Involved in the maturation of IscU.</text>
</comment>
<comment type="similarity">
    <text evidence="1">Belongs to the heat shock protein 70 family.</text>
</comment>
<proteinExistence type="inferred from homology"/>
<gene>
    <name evidence="1" type="primary">hscA</name>
    <name type="ordered locus">SPAB_00394</name>
</gene>
<name>HSCA_SALPB</name>
<feature type="chain" id="PRO_1000082986" description="Chaperone protein HscA">
    <location>
        <begin position="1"/>
        <end position="616"/>
    </location>
</feature>
<organism>
    <name type="scientific">Salmonella paratyphi B (strain ATCC BAA-1250 / SPB7)</name>
    <dbReference type="NCBI Taxonomy" id="1016998"/>
    <lineage>
        <taxon>Bacteria</taxon>
        <taxon>Pseudomonadati</taxon>
        <taxon>Pseudomonadota</taxon>
        <taxon>Gammaproteobacteria</taxon>
        <taxon>Enterobacterales</taxon>
        <taxon>Enterobacteriaceae</taxon>
        <taxon>Salmonella</taxon>
    </lineage>
</organism>
<protein>
    <recommendedName>
        <fullName evidence="1">Chaperone protein HscA</fullName>
    </recommendedName>
    <alternativeName>
        <fullName evidence="1">Hsc66</fullName>
    </alternativeName>
</protein>
<reference key="1">
    <citation type="submission" date="2007-11" db="EMBL/GenBank/DDBJ databases">
        <authorList>
            <consortium name="The Salmonella enterica serovar Paratyphi B Genome Sequencing Project"/>
            <person name="McClelland M."/>
            <person name="Sanderson E.K."/>
            <person name="Porwollik S."/>
            <person name="Spieth J."/>
            <person name="Clifton W.S."/>
            <person name="Fulton R."/>
            <person name="Cordes M."/>
            <person name="Wollam A."/>
            <person name="Shah N."/>
            <person name="Pepin K."/>
            <person name="Bhonagiri V."/>
            <person name="Nash W."/>
            <person name="Johnson M."/>
            <person name="Thiruvilangam P."/>
            <person name="Wilson R."/>
        </authorList>
    </citation>
    <scope>NUCLEOTIDE SEQUENCE [LARGE SCALE GENOMIC DNA]</scope>
    <source>
        <strain>ATCC BAA-1250 / SPB7</strain>
    </source>
</reference>
<dbReference type="EMBL" id="CP000886">
    <property type="protein sequence ID" value="ABX65829.1"/>
    <property type="molecule type" value="Genomic_DNA"/>
</dbReference>
<dbReference type="RefSeq" id="WP_001196673.1">
    <property type="nucleotide sequence ID" value="NC_010102.1"/>
</dbReference>
<dbReference type="SMR" id="A9N1X9"/>
<dbReference type="KEGG" id="spq:SPAB_00394"/>
<dbReference type="PATRIC" id="fig|1016998.12.peg.372"/>
<dbReference type="HOGENOM" id="CLU_005965_2_1_6"/>
<dbReference type="BioCyc" id="SENT1016998:SPAB_RS01620-MONOMER"/>
<dbReference type="Proteomes" id="UP000008556">
    <property type="component" value="Chromosome"/>
</dbReference>
<dbReference type="GO" id="GO:0005524">
    <property type="term" value="F:ATP binding"/>
    <property type="evidence" value="ECO:0007669"/>
    <property type="project" value="UniProtKB-KW"/>
</dbReference>
<dbReference type="GO" id="GO:0016887">
    <property type="term" value="F:ATP hydrolysis activity"/>
    <property type="evidence" value="ECO:0007669"/>
    <property type="project" value="UniProtKB-UniRule"/>
</dbReference>
<dbReference type="GO" id="GO:0140662">
    <property type="term" value="F:ATP-dependent protein folding chaperone"/>
    <property type="evidence" value="ECO:0007669"/>
    <property type="project" value="InterPro"/>
</dbReference>
<dbReference type="GO" id="GO:0051082">
    <property type="term" value="F:unfolded protein binding"/>
    <property type="evidence" value="ECO:0007669"/>
    <property type="project" value="InterPro"/>
</dbReference>
<dbReference type="GO" id="GO:0016226">
    <property type="term" value="P:iron-sulfur cluster assembly"/>
    <property type="evidence" value="ECO:0007669"/>
    <property type="project" value="InterPro"/>
</dbReference>
<dbReference type="CDD" id="cd10236">
    <property type="entry name" value="ASKHA_NBD_HSP70_HscA"/>
    <property type="match status" value="1"/>
</dbReference>
<dbReference type="FunFam" id="1.20.1270.10:FF:000006">
    <property type="entry name" value="Chaperone protein HscA"/>
    <property type="match status" value="1"/>
</dbReference>
<dbReference type="FunFam" id="3.30.420.40:FF:000046">
    <property type="entry name" value="Chaperone protein HscA"/>
    <property type="match status" value="1"/>
</dbReference>
<dbReference type="FunFam" id="3.90.640.10:FF:000013">
    <property type="entry name" value="Chaperone protein HscA"/>
    <property type="match status" value="1"/>
</dbReference>
<dbReference type="FunFam" id="2.60.34.10:FF:000005">
    <property type="entry name" value="Chaperone protein HscA homolog"/>
    <property type="match status" value="1"/>
</dbReference>
<dbReference type="Gene3D" id="1.20.1270.10">
    <property type="match status" value="1"/>
</dbReference>
<dbReference type="Gene3D" id="3.30.420.40">
    <property type="match status" value="2"/>
</dbReference>
<dbReference type="Gene3D" id="3.90.640.10">
    <property type="entry name" value="Actin, Chain A, domain 4"/>
    <property type="match status" value="1"/>
</dbReference>
<dbReference type="Gene3D" id="2.60.34.10">
    <property type="entry name" value="Substrate Binding Domain Of DNAk, Chain A, domain 1"/>
    <property type="match status" value="1"/>
</dbReference>
<dbReference type="HAMAP" id="MF_00679">
    <property type="entry name" value="HscA"/>
    <property type="match status" value="1"/>
</dbReference>
<dbReference type="InterPro" id="IPR043129">
    <property type="entry name" value="ATPase_NBD"/>
</dbReference>
<dbReference type="InterPro" id="IPR018181">
    <property type="entry name" value="Heat_shock_70_CS"/>
</dbReference>
<dbReference type="InterPro" id="IPR042039">
    <property type="entry name" value="HscA_NBD"/>
</dbReference>
<dbReference type="InterPro" id="IPR029048">
    <property type="entry name" value="HSP70_C_sf"/>
</dbReference>
<dbReference type="InterPro" id="IPR029047">
    <property type="entry name" value="HSP70_peptide-bd_sf"/>
</dbReference>
<dbReference type="InterPro" id="IPR013126">
    <property type="entry name" value="Hsp_70_fam"/>
</dbReference>
<dbReference type="InterPro" id="IPR010236">
    <property type="entry name" value="ISC_FeS_clus_asmbl_HscA"/>
</dbReference>
<dbReference type="NCBIfam" id="TIGR01991">
    <property type="entry name" value="HscA"/>
    <property type="match status" value="1"/>
</dbReference>
<dbReference type="NCBIfam" id="NF003520">
    <property type="entry name" value="PRK05183.1"/>
    <property type="match status" value="1"/>
</dbReference>
<dbReference type="PANTHER" id="PTHR19375">
    <property type="entry name" value="HEAT SHOCK PROTEIN 70KDA"/>
    <property type="match status" value="1"/>
</dbReference>
<dbReference type="Pfam" id="PF00012">
    <property type="entry name" value="HSP70"/>
    <property type="match status" value="1"/>
</dbReference>
<dbReference type="PRINTS" id="PR00301">
    <property type="entry name" value="HEATSHOCK70"/>
</dbReference>
<dbReference type="SUPFAM" id="SSF53067">
    <property type="entry name" value="Actin-like ATPase domain"/>
    <property type="match status" value="2"/>
</dbReference>
<dbReference type="SUPFAM" id="SSF100934">
    <property type="entry name" value="Heat shock protein 70kD (HSP70), C-terminal subdomain"/>
    <property type="match status" value="1"/>
</dbReference>
<dbReference type="SUPFAM" id="SSF100920">
    <property type="entry name" value="Heat shock protein 70kD (HSP70), peptide-binding domain"/>
    <property type="match status" value="1"/>
</dbReference>
<dbReference type="PROSITE" id="PS00297">
    <property type="entry name" value="HSP70_1"/>
    <property type="match status" value="1"/>
</dbReference>
<dbReference type="PROSITE" id="PS00329">
    <property type="entry name" value="HSP70_2"/>
    <property type="match status" value="1"/>
</dbReference>
<dbReference type="PROSITE" id="PS01036">
    <property type="entry name" value="HSP70_3"/>
    <property type="match status" value="1"/>
</dbReference>
<accession>A9N1X9</accession>